<accession>Q5QUN6</accession>
<reference key="1">
    <citation type="journal article" date="2004" name="Proc. Natl. Acad. Sci. U.S.A.">
        <title>Genome sequence of the deep-sea gamma-proteobacterium Idiomarina loihiensis reveals amino acid fermentation as a source of carbon and energy.</title>
        <authorList>
            <person name="Hou S."/>
            <person name="Saw J.H."/>
            <person name="Lee K.S."/>
            <person name="Freitas T.A."/>
            <person name="Belisle C."/>
            <person name="Kawarabayasi Y."/>
            <person name="Donachie S.P."/>
            <person name="Pikina A."/>
            <person name="Galperin M.Y."/>
            <person name="Koonin E.V."/>
            <person name="Makarova K.S."/>
            <person name="Omelchenko M.V."/>
            <person name="Sorokin A."/>
            <person name="Wolf Y.I."/>
            <person name="Li Q.X."/>
            <person name="Keum Y.S."/>
            <person name="Campbell S."/>
            <person name="Denery J."/>
            <person name="Aizawa S."/>
            <person name="Shibata S."/>
            <person name="Malahoff A."/>
            <person name="Alam M."/>
        </authorList>
    </citation>
    <scope>NUCLEOTIDE SEQUENCE [LARGE SCALE GENOMIC DNA]</scope>
    <source>
        <strain>ATCC BAA-735 / DSM 15497 / L2-TR</strain>
    </source>
</reference>
<comment type="function">
    <text evidence="1">Reversibly transfers an adenylyl group from ATP to 4'-phosphopantetheine, yielding dephospho-CoA (dPCoA) and pyrophosphate.</text>
</comment>
<comment type="catalytic activity">
    <reaction evidence="1">
        <text>(R)-4'-phosphopantetheine + ATP + H(+) = 3'-dephospho-CoA + diphosphate</text>
        <dbReference type="Rhea" id="RHEA:19801"/>
        <dbReference type="ChEBI" id="CHEBI:15378"/>
        <dbReference type="ChEBI" id="CHEBI:30616"/>
        <dbReference type="ChEBI" id="CHEBI:33019"/>
        <dbReference type="ChEBI" id="CHEBI:57328"/>
        <dbReference type="ChEBI" id="CHEBI:61723"/>
        <dbReference type="EC" id="2.7.7.3"/>
    </reaction>
</comment>
<comment type="cofactor">
    <cofactor evidence="1">
        <name>Mg(2+)</name>
        <dbReference type="ChEBI" id="CHEBI:18420"/>
    </cofactor>
</comment>
<comment type="pathway">
    <text evidence="1">Cofactor biosynthesis; coenzyme A biosynthesis; CoA from (R)-pantothenate: step 4/5.</text>
</comment>
<comment type="subunit">
    <text evidence="1">Homohexamer.</text>
</comment>
<comment type="subcellular location">
    <subcellularLocation>
        <location evidence="1">Cytoplasm</location>
    </subcellularLocation>
</comment>
<comment type="similarity">
    <text evidence="1">Belongs to the bacterial CoaD family.</text>
</comment>
<feature type="chain" id="PRO_0000156219" description="Phosphopantetheine adenylyltransferase">
    <location>
        <begin position="1"/>
        <end position="166"/>
    </location>
</feature>
<feature type="binding site" evidence="1">
    <location>
        <begin position="10"/>
        <end position="11"/>
    </location>
    <ligand>
        <name>ATP</name>
        <dbReference type="ChEBI" id="CHEBI:30616"/>
    </ligand>
</feature>
<feature type="binding site" evidence="1">
    <location>
        <position position="10"/>
    </location>
    <ligand>
        <name>substrate</name>
    </ligand>
</feature>
<feature type="binding site" evidence="1">
    <location>
        <position position="18"/>
    </location>
    <ligand>
        <name>ATP</name>
        <dbReference type="ChEBI" id="CHEBI:30616"/>
    </ligand>
</feature>
<feature type="binding site" evidence="1">
    <location>
        <position position="42"/>
    </location>
    <ligand>
        <name>substrate</name>
    </ligand>
</feature>
<feature type="binding site" evidence="1">
    <location>
        <position position="74"/>
    </location>
    <ligand>
        <name>substrate</name>
    </ligand>
</feature>
<feature type="binding site" evidence="1">
    <location>
        <position position="88"/>
    </location>
    <ligand>
        <name>substrate</name>
    </ligand>
</feature>
<feature type="binding site" evidence="1">
    <location>
        <begin position="89"/>
        <end position="91"/>
    </location>
    <ligand>
        <name>ATP</name>
        <dbReference type="ChEBI" id="CHEBI:30616"/>
    </ligand>
</feature>
<feature type="binding site" evidence="1">
    <location>
        <position position="99"/>
    </location>
    <ligand>
        <name>ATP</name>
        <dbReference type="ChEBI" id="CHEBI:30616"/>
    </ligand>
</feature>
<feature type="binding site" evidence="1">
    <location>
        <begin position="124"/>
        <end position="130"/>
    </location>
    <ligand>
        <name>ATP</name>
        <dbReference type="ChEBI" id="CHEBI:30616"/>
    </ligand>
</feature>
<feature type="site" description="Transition state stabilizer" evidence="1">
    <location>
        <position position="18"/>
    </location>
</feature>
<keyword id="KW-0067">ATP-binding</keyword>
<keyword id="KW-0173">Coenzyme A biosynthesis</keyword>
<keyword id="KW-0963">Cytoplasm</keyword>
<keyword id="KW-0460">Magnesium</keyword>
<keyword id="KW-0547">Nucleotide-binding</keyword>
<keyword id="KW-0548">Nucleotidyltransferase</keyword>
<keyword id="KW-1185">Reference proteome</keyword>
<keyword id="KW-0808">Transferase</keyword>
<organism>
    <name type="scientific">Idiomarina loihiensis (strain ATCC BAA-735 / DSM 15497 / L2-TR)</name>
    <dbReference type="NCBI Taxonomy" id="283942"/>
    <lineage>
        <taxon>Bacteria</taxon>
        <taxon>Pseudomonadati</taxon>
        <taxon>Pseudomonadota</taxon>
        <taxon>Gammaproteobacteria</taxon>
        <taxon>Alteromonadales</taxon>
        <taxon>Idiomarinaceae</taxon>
        <taxon>Idiomarina</taxon>
    </lineage>
</organism>
<evidence type="ECO:0000255" key="1">
    <source>
        <dbReference type="HAMAP-Rule" id="MF_00151"/>
    </source>
</evidence>
<gene>
    <name evidence="1" type="primary">coaD</name>
    <name type="ordered locus">IL0271</name>
</gene>
<protein>
    <recommendedName>
        <fullName evidence="1">Phosphopantetheine adenylyltransferase</fullName>
        <ecNumber evidence="1">2.7.7.3</ecNumber>
    </recommendedName>
    <alternativeName>
        <fullName evidence="1">Dephospho-CoA pyrophosphorylase</fullName>
    </alternativeName>
    <alternativeName>
        <fullName evidence="1">Pantetheine-phosphate adenylyltransferase</fullName>
        <shortName evidence="1">PPAT</shortName>
    </alternativeName>
</protein>
<proteinExistence type="inferred from homology"/>
<sequence length="166" mass="18201">MHRRAIYPGTFDPITNGHADLIERAANLFSEIVVGIAESPSKKPLFSLEERVLLAQQVTENLDNVTVVGFSGLLVNFAKEYEATVLIRGLRAVSDFEYEFQLANMNRRLAPNLESVFLTPAEENSFISSSLVKEVALHGGDVSGFTDARVASALEQKFSGKRPGKS</sequence>
<name>COAD_IDILO</name>
<dbReference type="EC" id="2.7.7.3" evidence="1"/>
<dbReference type="EMBL" id="AE017340">
    <property type="protein sequence ID" value="AAV81114.1"/>
    <property type="molecule type" value="Genomic_DNA"/>
</dbReference>
<dbReference type="RefSeq" id="WP_011233533.1">
    <property type="nucleotide sequence ID" value="NC_006512.1"/>
</dbReference>
<dbReference type="SMR" id="Q5QUN6"/>
<dbReference type="STRING" id="283942.IL0271"/>
<dbReference type="GeneID" id="41335418"/>
<dbReference type="KEGG" id="ilo:IL0271"/>
<dbReference type="eggNOG" id="COG0669">
    <property type="taxonomic scope" value="Bacteria"/>
</dbReference>
<dbReference type="HOGENOM" id="CLU_100149_0_1_6"/>
<dbReference type="OrthoDB" id="9806661at2"/>
<dbReference type="UniPathway" id="UPA00241">
    <property type="reaction ID" value="UER00355"/>
</dbReference>
<dbReference type="Proteomes" id="UP000001171">
    <property type="component" value="Chromosome"/>
</dbReference>
<dbReference type="GO" id="GO:0005737">
    <property type="term" value="C:cytoplasm"/>
    <property type="evidence" value="ECO:0007669"/>
    <property type="project" value="UniProtKB-SubCell"/>
</dbReference>
<dbReference type="GO" id="GO:0005524">
    <property type="term" value="F:ATP binding"/>
    <property type="evidence" value="ECO:0007669"/>
    <property type="project" value="UniProtKB-KW"/>
</dbReference>
<dbReference type="GO" id="GO:0004595">
    <property type="term" value="F:pantetheine-phosphate adenylyltransferase activity"/>
    <property type="evidence" value="ECO:0007669"/>
    <property type="project" value="UniProtKB-UniRule"/>
</dbReference>
<dbReference type="GO" id="GO:0015937">
    <property type="term" value="P:coenzyme A biosynthetic process"/>
    <property type="evidence" value="ECO:0007669"/>
    <property type="project" value="UniProtKB-UniRule"/>
</dbReference>
<dbReference type="CDD" id="cd02163">
    <property type="entry name" value="PPAT"/>
    <property type="match status" value="1"/>
</dbReference>
<dbReference type="Gene3D" id="3.40.50.620">
    <property type="entry name" value="HUPs"/>
    <property type="match status" value="1"/>
</dbReference>
<dbReference type="HAMAP" id="MF_00151">
    <property type="entry name" value="PPAT_bact"/>
    <property type="match status" value="1"/>
</dbReference>
<dbReference type="InterPro" id="IPR004821">
    <property type="entry name" value="Cyt_trans-like"/>
</dbReference>
<dbReference type="InterPro" id="IPR001980">
    <property type="entry name" value="PPAT"/>
</dbReference>
<dbReference type="InterPro" id="IPR014729">
    <property type="entry name" value="Rossmann-like_a/b/a_fold"/>
</dbReference>
<dbReference type="NCBIfam" id="TIGR01510">
    <property type="entry name" value="coaD_prev_kdtB"/>
    <property type="match status" value="1"/>
</dbReference>
<dbReference type="NCBIfam" id="TIGR00125">
    <property type="entry name" value="cyt_tran_rel"/>
    <property type="match status" value="1"/>
</dbReference>
<dbReference type="PANTHER" id="PTHR21342">
    <property type="entry name" value="PHOSPHOPANTETHEINE ADENYLYLTRANSFERASE"/>
    <property type="match status" value="1"/>
</dbReference>
<dbReference type="PANTHER" id="PTHR21342:SF1">
    <property type="entry name" value="PHOSPHOPANTETHEINE ADENYLYLTRANSFERASE"/>
    <property type="match status" value="1"/>
</dbReference>
<dbReference type="Pfam" id="PF01467">
    <property type="entry name" value="CTP_transf_like"/>
    <property type="match status" value="1"/>
</dbReference>
<dbReference type="PRINTS" id="PR01020">
    <property type="entry name" value="LPSBIOSNTHSS"/>
</dbReference>
<dbReference type="SUPFAM" id="SSF52374">
    <property type="entry name" value="Nucleotidylyl transferase"/>
    <property type="match status" value="1"/>
</dbReference>